<sequence>MVGVQICQGMTSEILFFSLQPQFSNMMNKNSRLHIDSNIRNTFFTEIGIGVSANSLLLLFNIFKFIHGQRSRLTDLPIGLLSLINLLMLLIMACIATDIFISCRRWDDIICKSLLYLYRTFRGLSLSTTCLLSVLQAIILSPRSSCLAKYKHKPPHHIFCAMLFLSVLYMFISSHLLLSIIATPNLTTNDFIHVSQSCSILPMSYLMQSMFSTLLAIRNVFLISLIVLSTWYMVALLCRHRKQTRHLQDTSLSRKASPEQRATRSILMLRSLFVLMSIFDSIVSCSRTMYLNDPTSYSIQLLVVHIYATVSPFVFMITEKHIVNYLKSMYVRVLNV</sequence>
<accession>Q5J3K5</accession>
<accession>Q62856</accession>
<keyword id="KW-0025">Alternative splicing</keyword>
<keyword id="KW-1003">Cell membrane</keyword>
<keyword id="KW-1015">Disulfide bond</keyword>
<keyword id="KW-0297">G-protein coupled receptor</keyword>
<keyword id="KW-0325">Glycoprotein</keyword>
<keyword id="KW-0472">Membrane</keyword>
<keyword id="KW-0589">Pheromone response</keyword>
<keyword id="KW-0675">Receptor</keyword>
<keyword id="KW-1185">Reference proteome</keyword>
<keyword id="KW-0807">Transducer</keyword>
<keyword id="KW-0812">Transmembrane</keyword>
<keyword id="KW-1133">Transmembrane helix</keyword>
<reference evidence="7 8" key="1">
    <citation type="journal article" date="1995" name="Cell">
        <title>A novel family of genes encoding putative pheromone receptors in mammals.</title>
        <authorList>
            <person name="Dulac C."/>
            <person name="Axel R."/>
        </authorList>
    </citation>
    <scope>NUCLEOTIDE SEQUENCE [MRNA] (ISOFORM 2)</scope>
    <scope>PUTATIVE FUNCTION</scope>
    <scope>TISSUE SPECIFICITY</scope>
    <source>
        <strain evidence="8">Sprague-Dawley</strain>
        <tissue evidence="8">Vomeronasal organ</tissue>
    </source>
</reference>
<reference evidence="7 9" key="2">
    <citation type="submission" date="2003-12" db="EMBL/GenBank/DDBJ databases">
        <title>Rat vomeronasal receptors.</title>
        <authorList>
            <person name="Capello L."/>
            <person name="Rodriguez I."/>
        </authorList>
    </citation>
    <scope>NUCLEOTIDE SEQUENCE [MRNA] (ISOFORM 1)</scope>
</reference>
<proteinExistence type="evidence at transcript level"/>
<protein>
    <recommendedName>
        <fullName>Vomeronasal type-1 receptor 102</fullName>
    </recommendedName>
    <alternativeName>
        <fullName>Pheromone receptor VN2</fullName>
    </alternativeName>
    <alternativeName>
        <fullName>Vomeronasal receptor 2</fullName>
    </alternativeName>
    <alternativeName>
        <fullName>Vomeronasal type-1 receptor A15</fullName>
    </alternativeName>
</protein>
<name>VR102_RAT</name>
<organism>
    <name type="scientific">Rattus norvegicus</name>
    <name type="common">Rat</name>
    <dbReference type="NCBI Taxonomy" id="10116"/>
    <lineage>
        <taxon>Eukaryota</taxon>
        <taxon>Metazoa</taxon>
        <taxon>Chordata</taxon>
        <taxon>Craniata</taxon>
        <taxon>Vertebrata</taxon>
        <taxon>Euteleostomi</taxon>
        <taxon>Mammalia</taxon>
        <taxon>Eutheria</taxon>
        <taxon>Euarchontoglires</taxon>
        <taxon>Glires</taxon>
        <taxon>Rodentia</taxon>
        <taxon>Myomorpha</taxon>
        <taxon>Muroidea</taxon>
        <taxon>Muridae</taxon>
        <taxon>Murinae</taxon>
        <taxon>Rattus</taxon>
    </lineage>
</organism>
<gene>
    <name type="primary">Vom1r102</name>
    <name type="synonym">V1ra15</name>
    <name evidence="10" type="synonym">Vnr2</name>
</gene>
<comment type="function">
    <text evidence="1 4">Putative pheromone receptor implicated in the regulation of social as well as reproductive behavior.</text>
</comment>
<comment type="subcellular location">
    <subcellularLocation>
        <location evidence="7">Cell membrane</location>
        <topology evidence="2">Multi-pass membrane protein</topology>
    </subcellularLocation>
</comment>
<comment type="alternative products">
    <event type="alternative splicing"/>
    <isoform>
        <id>Q5J3K5-1</id>
        <name evidence="5">1</name>
        <sequence type="displayed"/>
    </isoform>
    <isoform>
        <id>Q5J3K5-2</id>
        <name evidence="4">2</name>
        <sequence type="described" ref="VSP_052065"/>
    </isoform>
</comment>
<comment type="tissue specificity">
    <text evidence="4">Expressed in 1-4% of neurons of the vomeronasal organ. Only one pheromone receptor gene may be expressed in a particular neuron. Not expressed in the main olfactory epithelium.</text>
</comment>
<comment type="similarity">
    <text evidence="3">Belongs to the G-protein coupled receptor 1 family.</text>
</comment>
<feature type="chain" id="PRO_0000239971" description="Vomeronasal type-1 receptor 102">
    <location>
        <begin position="1"/>
        <end position="336"/>
    </location>
</feature>
<feature type="topological domain" description="Extracellular" evidence="2">
    <location>
        <begin position="1"/>
        <end position="42"/>
    </location>
</feature>
<feature type="transmembrane region" description="Helical; Name=1" evidence="2">
    <location>
        <begin position="43"/>
        <end position="63"/>
    </location>
</feature>
<feature type="topological domain" description="Cytoplasmic" evidence="2">
    <location>
        <begin position="64"/>
        <end position="75"/>
    </location>
</feature>
<feature type="transmembrane region" description="Helical; Name=2" evidence="2">
    <location>
        <begin position="76"/>
        <end position="96"/>
    </location>
</feature>
<feature type="topological domain" description="Extracellular" evidence="2">
    <location>
        <begin position="97"/>
        <end position="120"/>
    </location>
</feature>
<feature type="transmembrane region" description="Helical; Name=3" evidence="2">
    <location>
        <begin position="121"/>
        <end position="140"/>
    </location>
</feature>
<feature type="topological domain" description="Cytoplasmic" evidence="2">
    <location>
        <begin position="141"/>
        <end position="157"/>
    </location>
</feature>
<feature type="transmembrane region" description="Helical; Name=4" evidence="2">
    <location>
        <begin position="158"/>
        <end position="178"/>
    </location>
</feature>
<feature type="topological domain" description="Extracellular" evidence="2">
    <location>
        <begin position="179"/>
        <end position="213"/>
    </location>
</feature>
<feature type="transmembrane region" description="Helical; Name=5" evidence="2">
    <location>
        <begin position="214"/>
        <end position="234"/>
    </location>
</feature>
<feature type="topological domain" description="Cytoplasmic" evidence="2">
    <location>
        <begin position="235"/>
        <end position="264"/>
    </location>
</feature>
<feature type="transmembrane region" description="Helical; Name=6" evidence="2">
    <location>
        <begin position="265"/>
        <end position="285"/>
    </location>
</feature>
<feature type="topological domain" description="Extracellular" evidence="2">
    <location>
        <begin position="286"/>
        <end position="296"/>
    </location>
</feature>
<feature type="transmembrane region" description="Helical; Name=7" evidence="2">
    <location>
        <begin position="297"/>
        <end position="317"/>
    </location>
</feature>
<feature type="topological domain" description="Cytoplasmic" evidence="2">
    <location>
        <begin position="318"/>
        <end position="336"/>
    </location>
</feature>
<feature type="glycosylation site" description="N-linked (GlcNAc...) asparagine" evidence="2">
    <location>
        <position position="185"/>
    </location>
</feature>
<feature type="disulfide bond" evidence="3">
    <location>
        <begin position="111"/>
        <end position="198"/>
    </location>
</feature>
<feature type="splice variant" id="VSP_052065" description="In isoform 2." evidence="6">
    <original>MVGVQICQGMTSEILFFSLQ</original>
    <variation>MLSKK</variation>
    <location>
        <begin position="1"/>
        <end position="20"/>
    </location>
</feature>
<feature type="sequence conflict" description="In Ref. 1; AAC52288." evidence="7" ref="1">
    <original>V</original>
    <variation>G</variation>
    <location>
        <position position="274"/>
    </location>
</feature>
<feature type="sequence conflict" description="In Ref. 1; AAC52288." evidence="7" ref="1">
    <original>V</original>
    <variation>A</variation>
    <location>
        <position position="283"/>
    </location>
</feature>
<evidence type="ECO:0000250" key="1">
    <source>
        <dbReference type="UniProtKB" id="Q8VIC6"/>
    </source>
</evidence>
<evidence type="ECO:0000255" key="2"/>
<evidence type="ECO:0000255" key="3">
    <source>
        <dbReference type="PROSITE-ProRule" id="PRU00521"/>
    </source>
</evidence>
<evidence type="ECO:0000269" key="4">
    <source>
    </source>
</evidence>
<evidence type="ECO:0000269" key="5">
    <source ref="2"/>
</evidence>
<evidence type="ECO:0000303" key="6">
    <source>
    </source>
</evidence>
<evidence type="ECO:0000305" key="7"/>
<evidence type="ECO:0000312" key="8">
    <source>
        <dbReference type="EMBL" id="AAC52288.1"/>
    </source>
</evidence>
<evidence type="ECO:0000312" key="9">
    <source>
        <dbReference type="EMBL" id="AAR87972.1"/>
    </source>
</evidence>
<evidence type="ECO:0000312" key="10">
    <source>
        <dbReference type="RGD" id="708384"/>
    </source>
</evidence>
<dbReference type="EMBL" id="U36899">
    <property type="protein sequence ID" value="AAC52288.1"/>
    <property type="molecule type" value="mRNA"/>
</dbReference>
<dbReference type="EMBL" id="AY510305">
    <property type="protein sequence ID" value="AAR87972.1"/>
    <property type="molecule type" value="mRNA"/>
</dbReference>
<dbReference type="PIR" id="I61749">
    <property type="entry name" value="I61749"/>
</dbReference>
<dbReference type="RefSeq" id="NP_001395764.1">
    <molecule id="Q5J3K5-2"/>
    <property type="nucleotide sequence ID" value="NM_001408835.1"/>
</dbReference>
<dbReference type="RefSeq" id="NP_775420.2">
    <molecule id="Q5J3K5-1"/>
    <property type="nucleotide sequence ID" value="NM_173298.3"/>
</dbReference>
<dbReference type="SMR" id="Q5J3K5"/>
<dbReference type="STRING" id="10116.ENSRNOP00000073144"/>
<dbReference type="GlyCosmos" id="Q5J3K5">
    <property type="glycosylation" value="1 site, No reported glycans"/>
</dbReference>
<dbReference type="GlyGen" id="Q5J3K5">
    <property type="glycosylation" value="1 site"/>
</dbReference>
<dbReference type="Ensembl" id="ENSRNOT00000052101.4">
    <molecule id="Q5J3K5-2"/>
    <property type="protein sequence ID" value="ENSRNOP00000039516.4"/>
    <property type="gene ID" value="ENSRNOG00000055950.2"/>
</dbReference>
<dbReference type="GeneID" id="286957"/>
<dbReference type="UCSC" id="RGD:708384">
    <molecule id="Q5J3K5-1"/>
    <property type="organism name" value="rat"/>
</dbReference>
<dbReference type="AGR" id="RGD:708384"/>
<dbReference type="RGD" id="708384">
    <property type="gene designation" value="Vom1r102"/>
</dbReference>
<dbReference type="GeneTree" id="ENSGT01030000234553"/>
<dbReference type="InParanoid" id="Q5J3K5"/>
<dbReference type="OMA" id="SASKFMS"/>
<dbReference type="OrthoDB" id="77513at9989"/>
<dbReference type="PhylomeDB" id="Q5J3K5"/>
<dbReference type="PRO" id="PR:Q5J3K5"/>
<dbReference type="Proteomes" id="UP000002494">
    <property type="component" value="Chromosome 4"/>
</dbReference>
<dbReference type="GO" id="GO:0005886">
    <property type="term" value="C:plasma membrane"/>
    <property type="evidence" value="ECO:0007669"/>
    <property type="project" value="UniProtKB-SubCell"/>
</dbReference>
<dbReference type="GO" id="GO:0016503">
    <property type="term" value="F:pheromone receptor activity"/>
    <property type="evidence" value="ECO:0007669"/>
    <property type="project" value="InterPro"/>
</dbReference>
<dbReference type="GO" id="GO:0019236">
    <property type="term" value="P:response to pheromone"/>
    <property type="evidence" value="ECO:0007669"/>
    <property type="project" value="UniProtKB-KW"/>
</dbReference>
<dbReference type="GO" id="GO:0007606">
    <property type="term" value="P:sensory perception of chemical stimulus"/>
    <property type="evidence" value="ECO:0007669"/>
    <property type="project" value="UniProtKB-ARBA"/>
</dbReference>
<dbReference type="CDD" id="cd13949">
    <property type="entry name" value="7tm_V1R_pheromone"/>
    <property type="match status" value="1"/>
</dbReference>
<dbReference type="FunFam" id="1.20.1070.10:FF:000051">
    <property type="entry name" value="Vomeronasal type-1 receptor"/>
    <property type="match status" value="1"/>
</dbReference>
<dbReference type="Gene3D" id="1.20.1070.10">
    <property type="entry name" value="Rhodopsin 7-helix transmembrane proteins"/>
    <property type="match status" value="1"/>
</dbReference>
<dbReference type="InterPro" id="IPR017452">
    <property type="entry name" value="GPCR_Rhodpsn_7TM"/>
</dbReference>
<dbReference type="InterPro" id="IPR004072">
    <property type="entry name" value="Vmron_rcpt_1"/>
</dbReference>
<dbReference type="PANTHER" id="PTHR24062">
    <property type="entry name" value="VOMERONASAL TYPE-1 RECEPTOR"/>
    <property type="match status" value="1"/>
</dbReference>
<dbReference type="Pfam" id="PF03402">
    <property type="entry name" value="V1R"/>
    <property type="match status" value="1"/>
</dbReference>
<dbReference type="PRINTS" id="PR01534">
    <property type="entry name" value="VOMERONASL1R"/>
</dbReference>
<dbReference type="SUPFAM" id="SSF81321">
    <property type="entry name" value="Family A G protein-coupled receptor-like"/>
    <property type="match status" value="1"/>
</dbReference>
<dbReference type="PROSITE" id="PS50262">
    <property type="entry name" value="G_PROTEIN_RECEP_F1_2"/>
    <property type="match status" value="1"/>
</dbReference>